<proteinExistence type="evidence at protein level"/>
<dbReference type="EC" id="2.6.1.4" evidence="2"/>
<dbReference type="EC" id="2.6.1.2" evidence="2"/>
<dbReference type="EC" id="2.6.1.44" evidence="2"/>
<dbReference type="EC" id="2.6.1.-"/>
<dbReference type="EMBL" id="AF479639">
    <property type="protein sequence ID" value="AAN62332.1"/>
    <property type="molecule type" value="mRNA"/>
</dbReference>
<dbReference type="EMBL" id="AC005292">
    <property type="protein sequence ID" value="AAF87015.1"/>
    <property type="molecule type" value="Genomic_DNA"/>
</dbReference>
<dbReference type="EMBL" id="CP002684">
    <property type="protein sequence ID" value="AEE30370.1"/>
    <property type="molecule type" value="Genomic_DNA"/>
</dbReference>
<dbReference type="EMBL" id="CP002684">
    <property type="protein sequence ID" value="AEE30371.1"/>
    <property type="molecule type" value="Genomic_DNA"/>
</dbReference>
<dbReference type="EMBL" id="AF360195">
    <property type="protein sequence ID" value="AAK25905.1"/>
    <property type="molecule type" value="mRNA"/>
</dbReference>
<dbReference type="EMBL" id="AY042902">
    <property type="protein sequence ID" value="AAK68842.1"/>
    <property type="molecule type" value="mRNA"/>
</dbReference>
<dbReference type="EMBL" id="AY056379">
    <property type="protein sequence ID" value="AAL08235.1"/>
    <property type="molecule type" value="mRNA"/>
</dbReference>
<dbReference type="EMBL" id="AY058868">
    <property type="protein sequence ID" value="AAL24255.1"/>
    <property type="molecule type" value="mRNA"/>
</dbReference>
<dbReference type="EMBL" id="AY150373">
    <property type="protein sequence ID" value="AAN12918.1"/>
    <property type="molecule type" value="mRNA"/>
</dbReference>
<dbReference type="EMBL" id="BT002643">
    <property type="protein sequence ID" value="AAO11559.1"/>
    <property type="molecule type" value="mRNA"/>
</dbReference>
<dbReference type="EMBL" id="AK316871">
    <property type="protein sequence ID" value="BAH19579.1"/>
    <property type="molecule type" value="mRNA"/>
</dbReference>
<dbReference type="PIR" id="B86367">
    <property type="entry name" value="B86367"/>
</dbReference>
<dbReference type="RefSeq" id="NP_001031083.1">
    <molecule id="Q9LR30-2"/>
    <property type="nucleotide sequence ID" value="NM_001036006.1"/>
</dbReference>
<dbReference type="RefSeq" id="NP_564192.2">
    <molecule id="Q9LR30-1"/>
    <property type="nucleotide sequence ID" value="NM_102180.4"/>
</dbReference>
<dbReference type="SMR" id="Q9LR30"/>
<dbReference type="BioGRID" id="24179">
    <property type="interactions" value="2"/>
</dbReference>
<dbReference type="FunCoup" id="Q9LR30">
    <property type="interactions" value="2396"/>
</dbReference>
<dbReference type="IntAct" id="Q9LR30">
    <property type="interactions" value="2"/>
</dbReference>
<dbReference type="MINT" id="Q9LR30"/>
<dbReference type="STRING" id="3702.Q9LR30"/>
<dbReference type="iPTMnet" id="Q9LR30"/>
<dbReference type="PaxDb" id="3702-AT1G23310.1"/>
<dbReference type="ProMEX" id="Q9LR30"/>
<dbReference type="ProteomicsDB" id="221846">
    <molecule id="Q9LR30-1"/>
</dbReference>
<dbReference type="EnsemblPlants" id="AT1G23310.1">
    <molecule id="Q9LR30-1"/>
    <property type="protein sequence ID" value="AT1G23310.1"/>
    <property type="gene ID" value="AT1G23310"/>
</dbReference>
<dbReference type="EnsemblPlants" id="AT1G23310.2">
    <molecule id="Q9LR30-2"/>
    <property type="protein sequence ID" value="AT1G23310.2"/>
    <property type="gene ID" value="AT1G23310"/>
</dbReference>
<dbReference type="GeneID" id="838940"/>
<dbReference type="Gramene" id="AT1G23310.1">
    <molecule id="Q9LR30-1"/>
    <property type="protein sequence ID" value="AT1G23310.1"/>
    <property type="gene ID" value="AT1G23310"/>
</dbReference>
<dbReference type="Gramene" id="AT1G23310.2">
    <molecule id="Q9LR30-2"/>
    <property type="protein sequence ID" value="AT1G23310.2"/>
    <property type="gene ID" value="AT1G23310"/>
</dbReference>
<dbReference type="KEGG" id="ath:AT1G23310"/>
<dbReference type="Araport" id="AT1G23310"/>
<dbReference type="TAIR" id="AT1G23310">
    <property type="gene designation" value="GGT1"/>
</dbReference>
<dbReference type="eggNOG" id="KOG0258">
    <property type="taxonomic scope" value="Eukaryota"/>
</dbReference>
<dbReference type="InParanoid" id="Q9LR30"/>
<dbReference type="OMA" id="FIRERYQ"/>
<dbReference type="OrthoDB" id="1732682at2759"/>
<dbReference type="PhylomeDB" id="Q9LR30"/>
<dbReference type="BioCyc" id="ARA:AT1G23310-MONOMER"/>
<dbReference type="BioCyc" id="MetaCyc:AT1G23310-MONOMER"/>
<dbReference type="BRENDA" id="2.3.2.2">
    <property type="organism ID" value="399"/>
</dbReference>
<dbReference type="SABIO-RK" id="Q9LR30"/>
<dbReference type="UniPathway" id="UPA00288">
    <property type="reaction ID" value="UER00428"/>
</dbReference>
<dbReference type="UniPathway" id="UPA00322"/>
<dbReference type="UniPathway" id="UPA00528">
    <property type="reaction ID" value="UER00586"/>
</dbReference>
<dbReference type="CD-CODE" id="4299E36E">
    <property type="entry name" value="Nucleolus"/>
</dbReference>
<dbReference type="PRO" id="PR:Q9LR30"/>
<dbReference type="Proteomes" id="UP000006548">
    <property type="component" value="Chromosome 1"/>
</dbReference>
<dbReference type="ExpressionAtlas" id="Q9LR30">
    <property type="expression patterns" value="baseline and differential"/>
</dbReference>
<dbReference type="GO" id="GO:0048046">
    <property type="term" value="C:apoplast"/>
    <property type="evidence" value="ECO:0007005"/>
    <property type="project" value="TAIR"/>
</dbReference>
<dbReference type="GO" id="GO:0009507">
    <property type="term" value="C:chloroplast"/>
    <property type="evidence" value="ECO:0007005"/>
    <property type="project" value="TAIR"/>
</dbReference>
<dbReference type="GO" id="GO:0005829">
    <property type="term" value="C:cytosol"/>
    <property type="evidence" value="ECO:0007005"/>
    <property type="project" value="TAIR"/>
</dbReference>
<dbReference type="GO" id="GO:0005634">
    <property type="term" value="C:nucleus"/>
    <property type="evidence" value="ECO:0007005"/>
    <property type="project" value="TAIR"/>
</dbReference>
<dbReference type="GO" id="GO:0005777">
    <property type="term" value="C:peroxisome"/>
    <property type="evidence" value="ECO:0000314"/>
    <property type="project" value="TAIR"/>
</dbReference>
<dbReference type="GO" id="GO:0000325">
    <property type="term" value="C:plant-type vacuole"/>
    <property type="evidence" value="ECO:0007005"/>
    <property type="project" value="TAIR"/>
</dbReference>
<dbReference type="GO" id="GO:0008453">
    <property type="term" value="F:alanine-glyoxylate transaminase activity"/>
    <property type="evidence" value="ECO:0000314"/>
    <property type="project" value="TAIR"/>
</dbReference>
<dbReference type="GO" id="GO:0047958">
    <property type="term" value="F:glycine:2-oxoglutarate aminotransferase activity"/>
    <property type="evidence" value="ECO:0000314"/>
    <property type="project" value="TAIR"/>
</dbReference>
<dbReference type="GO" id="GO:0004021">
    <property type="term" value="F:L-alanine:2-oxoglutarate aminotransferase activity"/>
    <property type="evidence" value="ECO:0000314"/>
    <property type="project" value="TAIR"/>
</dbReference>
<dbReference type="GO" id="GO:0003729">
    <property type="term" value="F:mRNA binding"/>
    <property type="evidence" value="ECO:0000314"/>
    <property type="project" value="TAIR"/>
</dbReference>
<dbReference type="GO" id="GO:0030170">
    <property type="term" value="F:pyridoxal phosphate binding"/>
    <property type="evidence" value="ECO:0007669"/>
    <property type="project" value="InterPro"/>
</dbReference>
<dbReference type="GO" id="GO:0006545">
    <property type="term" value="P:glycine biosynthetic process"/>
    <property type="evidence" value="ECO:0007669"/>
    <property type="project" value="UniProtKB-UniPathway"/>
</dbReference>
<dbReference type="GO" id="GO:0042853">
    <property type="term" value="P:L-alanine catabolic process"/>
    <property type="evidence" value="ECO:0007669"/>
    <property type="project" value="UniProtKB-UniPathway"/>
</dbReference>
<dbReference type="GO" id="GO:0009853">
    <property type="term" value="P:photorespiration"/>
    <property type="evidence" value="ECO:0000304"/>
    <property type="project" value="TAIR"/>
</dbReference>
<dbReference type="GO" id="GO:0001666">
    <property type="term" value="P:response to hypoxia"/>
    <property type="evidence" value="ECO:0000270"/>
    <property type="project" value="UniProtKB"/>
</dbReference>
<dbReference type="CDD" id="cd00609">
    <property type="entry name" value="AAT_like"/>
    <property type="match status" value="1"/>
</dbReference>
<dbReference type="FunFam" id="1.10.287.1970:FF:000001">
    <property type="entry name" value="Alanine aminotransferase 2"/>
    <property type="match status" value="1"/>
</dbReference>
<dbReference type="FunFam" id="3.90.1150.10:FF:000010">
    <property type="entry name" value="Alanine aminotransferase 2"/>
    <property type="match status" value="1"/>
</dbReference>
<dbReference type="FunFam" id="3.40.640.10:FF:000012">
    <property type="entry name" value="alanine aminotransferase 2"/>
    <property type="match status" value="1"/>
</dbReference>
<dbReference type="Gene3D" id="1.10.287.1970">
    <property type="match status" value="1"/>
</dbReference>
<dbReference type="Gene3D" id="3.90.1150.10">
    <property type="entry name" value="Aspartate Aminotransferase, domain 1"/>
    <property type="match status" value="1"/>
</dbReference>
<dbReference type="Gene3D" id="3.40.640.10">
    <property type="entry name" value="Type I PLP-dependent aspartate aminotransferase-like (Major domain)"/>
    <property type="match status" value="1"/>
</dbReference>
<dbReference type="InterPro" id="IPR045088">
    <property type="entry name" value="ALAT1/2-like"/>
</dbReference>
<dbReference type="InterPro" id="IPR004839">
    <property type="entry name" value="Aminotransferase_I/II_large"/>
</dbReference>
<dbReference type="InterPro" id="IPR015424">
    <property type="entry name" value="PyrdxlP-dep_Trfase"/>
</dbReference>
<dbReference type="InterPro" id="IPR015421">
    <property type="entry name" value="PyrdxlP-dep_Trfase_major"/>
</dbReference>
<dbReference type="InterPro" id="IPR015422">
    <property type="entry name" value="PyrdxlP-dep_Trfase_small"/>
</dbReference>
<dbReference type="PANTHER" id="PTHR11751">
    <property type="entry name" value="ALANINE AMINOTRANSFERASE"/>
    <property type="match status" value="1"/>
</dbReference>
<dbReference type="PANTHER" id="PTHR11751:SF472">
    <property type="entry name" value="GLUTAMATE--GLYOXYLATE AMINOTRANSFERASE 1"/>
    <property type="match status" value="1"/>
</dbReference>
<dbReference type="Pfam" id="PF00155">
    <property type="entry name" value="Aminotran_1_2"/>
    <property type="match status" value="1"/>
</dbReference>
<dbReference type="SUPFAM" id="SSF53383">
    <property type="entry name" value="PLP-dependent transferases"/>
    <property type="match status" value="1"/>
</dbReference>
<protein>
    <recommendedName>
        <fullName>Glutamate--glyoxylate aminotransferase 1</fullName>
        <shortName>AtGGT2</shortName>
        <ecNumber evidence="2">2.6.1.4</ecNumber>
    </recommendedName>
    <alternativeName>
        <fullName>Alanine aminotransferase GGT1</fullName>
        <ecNumber evidence="2">2.6.1.2</ecNumber>
    </alternativeName>
    <alternativeName>
        <fullName>Alanine--glyoxylate aminotransferase GGT1</fullName>
        <ecNumber evidence="2">2.6.1.44</ecNumber>
    </alternativeName>
    <alternativeName>
        <fullName>Alanine-2-oxoglutarate aminotransferase 1</fullName>
        <ecNumber>2.6.1.-</ecNumber>
    </alternativeName>
</protein>
<sequence length="481" mass="53301">MALKALDYDTLNENVKKCQYAVRGELYLRASELQKEGKKIIFTNVGNPHALGQKPLTFPRQVVALCQAPFLLDDPNVGMLFPADAIARAKHYLSLTSGGLGAYSDSRGLPGVRKEVAEFIQRRDGYPSDPELIFLTDGASKGVMQILNCVIRGNGDGILVPVPQYPLYSATISLLGGTLVPYYLDESENWGLDVANLRQSVAQARSQGITVRAMVIINPGNPTGQCLSEANIREILKFCYNEKLVLLGDEVYQQNIYQDERPFISSKKVLMEMGSPFSKEVQLVSFHTVSKGYWGECGQRGGYFEMTNLPPRVVEEIYKVASIALSPNVSAQIFMGLMVNPPKPGDISYDQFARESKGILESLRRRARLMTDGFNSCKNVVCNFTEGAMYSFPQIRLPTGALQAAKQAGKVPDVFYCLKLLEATGISTVPGSGFGQKEGVFHLRTTILPAEDEMPEIMDSFKKFNDEFMTQYDNNFGYSKM</sequence>
<evidence type="ECO:0000250" key="1"/>
<evidence type="ECO:0000269" key="2">
    <source>
    </source>
</evidence>
<evidence type="ECO:0000269" key="3">
    <source>
    </source>
</evidence>
<evidence type="ECO:0000269" key="4">
    <source>
    </source>
</evidence>
<evidence type="ECO:0000269" key="5">
    <source>
    </source>
</evidence>
<evidence type="ECO:0000269" key="6">
    <source>
    </source>
</evidence>
<evidence type="ECO:0000303" key="7">
    <source>
    </source>
</evidence>
<evidence type="ECO:0000305" key="8"/>
<accession>Q9LR30</accession>
<accession>B9DFR2</accession>
<accession>Q93Z05</accession>
<accession>Q94B22</accession>
<accession>Q9C5K2</accession>
<reference key="1">
    <citation type="journal article" date="2003" name="Plant Physiol.">
        <title>Alanine aminotransferase homologs catalyze the glutamate:glyoxylate aminotransferase reaction in peroxisomes of Arabidopsis.</title>
        <authorList>
            <person name="Liepman A.H."/>
            <person name="Olsen L.J."/>
        </authorList>
    </citation>
    <scope>NUCLEOTIDE SEQUENCE [MRNA] (ISOFORM 1)</scope>
    <scope>FUNCTION</scope>
    <scope>SUBCELLULAR LOCATION</scope>
    <scope>TISSUE SPECIFICITY</scope>
    <scope>CATALYTIC ACTIVITY</scope>
    <scope>BIOPHYSICOCHEMICAL PROPERTIES</scope>
    <scope>INDUCTION BY LIGHT</scope>
</reference>
<reference key="2">
    <citation type="journal article" date="2000" name="Nature">
        <title>Sequence and analysis of chromosome 1 of the plant Arabidopsis thaliana.</title>
        <authorList>
            <person name="Theologis A."/>
            <person name="Ecker J.R."/>
            <person name="Palm C.J."/>
            <person name="Federspiel N.A."/>
            <person name="Kaul S."/>
            <person name="White O."/>
            <person name="Alonso J."/>
            <person name="Altafi H."/>
            <person name="Araujo R."/>
            <person name="Bowman C.L."/>
            <person name="Brooks S.Y."/>
            <person name="Buehler E."/>
            <person name="Chan A."/>
            <person name="Chao Q."/>
            <person name="Chen H."/>
            <person name="Cheuk R.F."/>
            <person name="Chin C.W."/>
            <person name="Chung M.K."/>
            <person name="Conn L."/>
            <person name="Conway A.B."/>
            <person name="Conway A.R."/>
            <person name="Creasy T.H."/>
            <person name="Dewar K."/>
            <person name="Dunn P."/>
            <person name="Etgu P."/>
            <person name="Feldblyum T.V."/>
            <person name="Feng J.-D."/>
            <person name="Fong B."/>
            <person name="Fujii C.Y."/>
            <person name="Gill J.E."/>
            <person name="Goldsmith A.D."/>
            <person name="Haas B."/>
            <person name="Hansen N.F."/>
            <person name="Hughes B."/>
            <person name="Huizar L."/>
            <person name="Hunter J.L."/>
            <person name="Jenkins J."/>
            <person name="Johnson-Hopson C."/>
            <person name="Khan S."/>
            <person name="Khaykin E."/>
            <person name="Kim C.J."/>
            <person name="Koo H.L."/>
            <person name="Kremenetskaia I."/>
            <person name="Kurtz D.B."/>
            <person name="Kwan A."/>
            <person name="Lam B."/>
            <person name="Langin-Hooper S."/>
            <person name="Lee A."/>
            <person name="Lee J.M."/>
            <person name="Lenz C.A."/>
            <person name="Li J.H."/>
            <person name="Li Y.-P."/>
            <person name="Lin X."/>
            <person name="Liu S.X."/>
            <person name="Liu Z.A."/>
            <person name="Luros J.S."/>
            <person name="Maiti R."/>
            <person name="Marziali A."/>
            <person name="Militscher J."/>
            <person name="Miranda M."/>
            <person name="Nguyen M."/>
            <person name="Nierman W.C."/>
            <person name="Osborne B.I."/>
            <person name="Pai G."/>
            <person name="Peterson J."/>
            <person name="Pham P.K."/>
            <person name="Rizzo M."/>
            <person name="Rooney T."/>
            <person name="Rowley D."/>
            <person name="Sakano H."/>
            <person name="Salzberg S.L."/>
            <person name="Schwartz J.R."/>
            <person name="Shinn P."/>
            <person name="Southwick A.M."/>
            <person name="Sun H."/>
            <person name="Tallon L.J."/>
            <person name="Tambunga G."/>
            <person name="Toriumi M.J."/>
            <person name="Town C.D."/>
            <person name="Utterback T."/>
            <person name="Van Aken S."/>
            <person name="Vaysberg M."/>
            <person name="Vysotskaia V.S."/>
            <person name="Walker M."/>
            <person name="Wu D."/>
            <person name="Yu G."/>
            <person name="Fraser C.M."/>
            <person name="Venter J.C."/>
            <person name="Davis R.W."/>
        </authorList>
    </citation>
    <scope>NUCLEOTIDE SEQUENCE [LARGE SCALE GENOMIC DNA]</scope>
    <source>
        <strain>cv. Columbia</strain>
    </source>
</reference>
<reference key="3">
    <citation type="journal article" date="2017" name="Plant J.">
        <title>Araport11: a complete reannotation of the Arabidopsis thaliana reference genome.</title>
        <authorList>
            <person name="Cheng C.Y."/>
            <person name="Krishnakumar V."/>
            <person name="Chan A.P."/>
            <person name="Thibaud-Nissen F."/>
            <person name="Schobel S."/>
            <person name="Town C.D."/>
        </authorList>
    </citation>
    <scope>GENOME REANNOTATION</scope>
    <source>
        <strain>cv. Columbia</strain>
    </source>
</reference>
<reference key="4">
    <citation type="journal article" date="2003" name="Science">
        <title>Empirical analysis of transcriptional activity in the Arabidopsis genome.</title>
        <authorList>
            <person name="Yamada K."/>
            <person name="Lim J."/>
            <person name="Dale J.M."/>
            <person name="Chen H."/>
            <person name="Shinn P."/>
            <person name="Palm C.J."/>
            <person name="Southwick A.M."/>
            <person name="Wu H.C."/>
            <person name="Kim C.J."/>
            <person name="Nguyen M."/>
            <person name="Pham P.K."/>
            <person name="Cheuk R.F."/>
            <person name="Karlin-Newmann G."/>
            <person name="Liu S.X."/>
            <person name="Lam B."/>
            <person name="Sakano H."/>
            <person name="Wu T."/>
            <person name="Yu G."/>
            <person name="Miranda M."/>
            <person name="Quach H.L."/>
            <person name="Tripp M."/>
            <person name="Chang C.H."/>
            <person name="Lee J.M."/>
            <person name="Toriumi M.J."/>
            <person name="Chan M.M."/>
            <person name="Tang C.C."/>
            <person name="Onodera C.S."/>
            <person name="Deng J.M."/>
            <person name="Akiyama K."/>
            <person name="Ansari Y."/>
            <person name="Arakawa T."/>
            <person name="Banh J."/>
            <person name="Banno F."/>
            <person name="Bowser L."/>
            <person name="Brooks S.Y."/>
            <person name="Carninci P."/>
            <person name="Chao Q."/>
            <person name="Choy N."/>
            <person name="Enju A."/>
            <person name="Goldsmith A.D."/>
            <person name="Gurjal M."/>
            <person name="Hansen N.F."/>
            <person name="Hayashizaki Y."/>
            <person name="Johnson-Hopson C."/>
            <person name="Hsuan V.W."/>
            <person name="Iida K."/>
            <person name="Karnes M."/>
            <person name="Khan S."/>
            <person name="Koesema E."/>
            <person name="Ishida J."/>
            <person name="Jiang P.X."/>
            <person name="Jones T."/>
            <person name="Kawai J."/>
            <person name="Kamiya A."/>
            <person name="Meyers C."/>
            <person name="Nakajima M."/>
            <person name="Narusaka M."/>
            <person name="Seki M."/>
            <person name="Sakurai T."/>
            <person name="Satou M."/>
            <person name="Tamse R."/>
            <person name="Vaysberg M."/>
            <person name="Wallender E.K."/>
            <person name="Wong C."/>
            <person name="Yamamura Y."/>
            <person name="Yuan S."/>
            <person name="Shinozaki K."/>
            <person name="Davis R.W."/>
            <person name="Theologis A."/>
            <person name="Ecker J.R."/>
        </authorList>
    </citation>
    <scope>NUCLEOTIDE SEQUENCE [LARGE SCALE MRNA] (ISOFORM 1)</scope>
    <source>
        <strain>cv. Columbia</strain>
    </source>
</reference>
<reference key="5">
    <citation type="journal article" date="2009" name="DNA Res.">
        <title>Analysis of multiple occurrences of alternative splicing events in Arabidopsis thaliana using novel sequenced full-length cDNAs.</title>
        <authorList>
            <person name="Iida K."/>
            <person name="Fukami-Kobayashi K."/>
            <person name="Toyoda A."/>
            <person name="Sakaki Y."/>
            <person name="Kobayashi M."/>
            <person name="Seki M."/>
            <person name="Shinozaki K."/>
        </authorList>
    </citation>
    <scope>NUCLEOTIDE SEQUENCE [LARGE SCALE MRNA] (ISOFORM 2)</scope>
    <source>
        <strain>cv. Columbia</strain>
    </source>
</reference>
<reference key="6">
    <citation type="journal article" date="2007" name="Mol. Cell. Proteomics">
        <title>Multidimensional protein identification technology (MudPIT) analysis of ubiquitinated proteins in plants.</title>
        <authorList>
            <person name="Maor R."/>
            <person name="Jones A."/>
            <person name="Nuehse T.S."/>
            <person name="Studholme D.J."/>
            <person name="Peck S.C."/>
            <person name="Shirasu K."/>
        </authorList>
    </citation>
    <scope>IDENTIFICATION BY MASS SPECTROMETRY [LARGE SCALE ANALYSIS]</scope>
    <source>
        <strain>cv. Landsberg erecta</strain>
    </source>
</reference>
<reference key="7">
    <citation type="journal article" date="2007" name="Plant Cell">
        <title>Proteome analysis of Arabidopsis leaf peroxisomes reveals novel targeting peptides, metabolic pathways, and defense mechanisms.</title>
        <authorList>
            <person name="Reumann S."/>
            <person name="Babujee L."/>
            <person name="Ma C."/>
            <person name="Wienkoop S."/>
            <person name="Siemsen T."/>
            <person name="Antonicelli G.E."/>
            <person name="Rasche N."/>
            <person name="Lueder F."/>
            <person name="Weckwerth W."/>
            <person name="Jahn O."/>
        </authorList>
    </citation>
    <scope>IDENTIFICATION BY MASS SPECTROMETRY</scope>
</reference>
<reference key="8">
    <citation type="journal article" date="2003" name="Plant J.">
        <title>Identification of photorespiratory glutamate:glyoxylate aminotransferase (GGAT) gene in Arabidopsis.</title>
        <authorList>
            <person name="Igarashi D."/>
            <person name="Miwa T."/>
            <person name="Seki M."/>
            <person name="Kobayashi M."/>
            <person name="Kato T."/>
            <person name="Tabata S."/>
            <person name="Shinozaki K."/>
            <person name="Ohsumi C."/>
        </authorList>
    </citation>
    <scope>FUNCTION</scope>
    <scope>SUBCELLULAR LOCATION</scope>
    <scope>DISRUPTION PHENOTYPE</scope>
    <scope>TISSUE SPECIFICITY</scope>
    <scope>GENE FAMILY</scope>
    <scope>NOMENCLATURE</scope>
</reference>
<reference key="9">
    <citation type="journal article" date="2006" name="Plant Physiol.">
        <title>Glutamate:glyoxylate aminotransferase modulates amino acid content during photorespiration.</title>
        <authorList>
            <person name="Igarashi D."/>
            <person name="Tsuchida H."/>
            <person name="Miyao M."/>
            <person name="Ohsumi C."/>
        </authorList>
    </citation>
    <scope>FUNCTION IN PHOTORESPIRATION</scope>
    <source>
        <strain>cv. Columbia</strain>
    </source>
</reference>
<reference key="10">
    <citation type="journal article" date="2007" name="Plant J.">
        <title>Alanine aminotransferase catalyses the breakdown of alanine after hypoxia in Arabidopsis thaliana.</title>
        <authorList>
            <person name="Miyashita Y."/>
            <person name="Dolferus R."/>
            <person name="Ismond K.P."/>
            <person name="Good A.G."/>
        </authorList>
    </citation>
    <scope>TISSUE SPECIFICITY</scope>
    <scope>INDUCTION BY HYPOXIC STRESS</scope>
</reference>
<reference key="11">
    <citation type="journal article" date="2007" name="Plant Mol. Biol.">
        <title>Altered ABA, proline and hydrogen peroxide in an Arabidopsis glutamate:glyoxylate aminotransferase mutant.</title>
        <authorList>
            <person name="Verslues P.E."/>
            <person name="Kim Y.-S."/>
            <person name="Zhu J.-K."/>
        </authorList>
    </citation>
    <scope>FUNCTION</scope>
    <scope>MUTAGENESIS OF LEU-109</scope>
    <scope>DISRUPTION PHENOTYPE</scope>
    <source>
        <strain>cv. C24</strain>
        <strain>cv. Columbia</strain>
    </source>
</reference>
<feature type="chain" id="PRO_0000416040" description="Glutamate--glyoxylate aminotransferase 1">
    <location>
        <begin position="1"/>
        <end position="481"/>
    </location>
</feature>
<feature type="short sequence motif" description="Peroxisomal targeting signal">
    <location>
        <begin position="479"/>
        <end position="481"/>
    </location>
</feature>
<feature type="modified residue" description="N6-(pyridoxal phosphate)lysine" evidence="1">
    <location>
        <position position="291"/>
    </location>
</feature>
<feature type="splice variant" id="VSP_042465" description="In isoform 2." evidence="7">
    <original>VF</original>
    <variation>RR</variation>
    <location>
        <begin position="440"/>
        <end position="441"/>
    </location>
</feature>
<feature type="splice variant" id="VSP_042466" description="In isoform 2." evidence="7">
    <location>
        <begin position="442"/>
        <end position="481"/>
    </location>
</feature>
<feature type="mutagenesis site" description="In ggt1-1; loss of alanine aminotransferase activity. Pale green and slow growth, with increased light sensitivity. Impaired ABA and stress responses, including gene expression, proline and ABA metabolism stimulation." evidence="5">
    <original>L</original>
    <variation>F</variation>
    <location>
        <position position="109"/>
    </location>
</feature>
<feature type="sequence conflict" description="In Ref. 4; AAL24255/AAO11559." evidence="8" ref="4">
    <original>D</original>
    <variation>N</variation>
    <location>
        <position position="129"/>
    </location>
</feature>
<feature type="sequence conflict" description="In Ref. 4; AAK25905." evidence="8" ref="4">
    <original>C</original>
    <variation>R</variation>
    <location>
        <position position="382"/>
    </location>
</feature>
<gene>
    <name type="primary">GGAT1</name>
    <name type="synonym">AOAT1</name>
    <name type="synonym">GGT1</name>
    <name type="ordered locus">At1g23310</name>
    <name type="ORF">F26F24.16</name>
    <name type="ORF">F26F24_4</name>
</gene>
<comment type="function">
    <text evidence="2 3 4 5">Catalyzes the glutamate:glyoxylate (GGT or GGAT), alanine:glyoxylate (AGT), alanine:2-oxoglutarate (AKT) and glutamate:pyruvate (GPT) aminotransferase reactions in peroxisomes. Required for abscisic acid (ABA)- and stress-mediated responses in an H(2)O(2)-dependent manner. Functions as a photorespiratory aminotransferase that modulates amino acid content during photorespiration (GGAT activity); promotes serine, glycine and citrulline metabolism in response to light.</text>
</comment>
<comment type="catalytic activity">
    <reaction evidence="2">
        <text>L-alanine + 2-oxoglutarate = pyruvate + L-glutamate</text>
        <dbReference type="Rhea" id="RHEA:19453"/>
        <dbReference type="ChEBI" id="CHEBI:15361"/>
        <dbReference type="ChEBI" id="CHEBI:16810"/>
        <dbReference type="ChEBI" id="CHEBI:29985"/>
        <dbReference type="ChEBI" id="CHEBI:57972"/>
        <dbReference type="EC" id="2.6.1.2"/>
    </reaction>
</comment>
<comment type="catalytic activity">
    <reaction evidence="2">
        <text>glyoxylate + L-alanine = glycine + pyruvate</text>
        <dbReference type="Rhea" id="RHEA:24248"/>
        <dbReference type="ChEBI" id="CHEBI:15361"/>
        <dbReference type="ChEBI" id="CHEBI:36655"/>
        <dbReference type="ChEBI" id="CHEBI:57305"/>
        <dbReference type="ChEBI" id="CHEBI:57972"/>
        <dbReference type="EC" id="2.6.1.44"/>
    </reaction>
</comment>
<comment type="catalytic activity">
    <reaction evidence="2">
        <text>glycine + 2-oxoglutarate = glyoxylate + L-glutamate</text>
        <dbReference type="Rhea" id="RHEA:14089"/>
        <dbReference type="ChEBI" id="CHEBI:16810"/>
        <dbReference type="ChEBI" id="CHEBI:29985"/>
        <dbReference type="ChEBI" id="CHEBI:36655"/>
        <dbReference type="ChEBI" id="CHEBI:57305"/>
        <dbReference type="EC" id="2.6.1.4"/>
    </reaction>
</comment>
<comment type="cofactor">
    <cofactor evidence="1">
        <name>pyridoxal 5'-phosphate</name>
        <dbReference type="ChEBI" id="CHEBI:597326"/>
    </cofactor>
</comment>
<comment type="biophysicochemical properties">
    <kinetics>
        <KM evidence="2">3 mM for glutamate</KM>
        <KM evidence="2">7.16 mM for alanine</KM>
        <KM evidence="2">0.27 mM for glyoxylate</KM>
        <KM evidence="2">0.27 mM for 2-oxoglutarate</KM>
        <KM evidence="2">0.33 mM for pyruvate</KM>
    </kinetics>
</comment>
<comment type="pathway">
    <text>Amino-acid biosynthesis; glycine biosynthesis; glycine from glyoxylate: step 1/1.</text>
</comment>
<comment type="pathway">
    <text>Photosynthesis; C4 acid pathway.</text>
</comment>
<comment type="pathway">
    <text>Amino-acid degradation; L-alanine degradation via transaminase pathway; pyruvate from L-alanine: step 1/1.</text>
</comment>
<comment type="subunit">
    <text evidence="1">Homodimer.</text>
</comment>
<comment type="subcellular location">
    <subcellularLocation>
        <location evidence="2 3">Peroxisome</location>
    </subcellularLocation>
</comment>
<comment type="alternative products">
    <event type="alternative splicing"/>
    <isoform>
        <id>Q9LR30-1</id>
        <name>1</name>
        <sequence type="displayed"/>
    </isoform>
    <isoform>
        <id>Q9LR30-2</id>
        <name>2</name>
        <sequence type="described" ref="VSP_042465 VSP_042466"/>
    </isoform>
</comment>
<comment type="tissue specificity">
    <text evidence="2 3 6">Mostly expressed in leaves, and, to a lower extent, in shoots, stems, flowers, seedlings and green siliques.</text>
</comment>
<comment type="induction">
    <text evidence="2 6">Down regulated in the dark. Slightly induced upon low-oxygen stress in shoots.</text>
</comment>
<comment type="PTM">
    <text evidence="1">The N-terminus is blocked.</text>
</comment>
<comment type="disruption phenotype">
    <text evidence="3 5">Reduced growth. Loss of alanine aminotransferase activity and increased light sensitivity alleviated by addition of sucrose and rescued by high CO(2). Higher H(2)O(2) levels in light conditions. Greater root growth in low water potential and upon NaCl-stress.</text>
</comment>
<comment type="similarity">
    <text evidence="8">Belongs to the class-I pyridoxal-phosphate-dependent aminotransferase family. Alanine aminotransferase subfamily.</text>
</comment>
<name>GGT1_ARATH</name>
<organism>
    <name type="scientific">Arabidopsis thaliana</name>
    <name type="common">Mouse-ear cress</name>
    <dbReference type="NCBI Taxonomy" id="3702"/>
    <lineage>
        <taxon>Eukaryota</taxon>
        <taxon>Viridiplantae</taxon>
        <taxon>Streptophyta</taxon>
        <taxon>Embryophyta</taxon>
        <taxon>Tracheophyta</taxon>
        <taxon>Spermatophyta</taxon>
        <taxon>Magnoliopsida</taxon>
        <taxon>eudicotyledons</taxon>
        <taxon>Gunneridae</taxon>
        <taxon>Pentapetalae</taxon>
        <taxon>rosids</taxon>
        <taxon>malvids</taxon>
        <taxon>Brassicales</taxon>
        <taxon>Brassicaceae</taxon>
        <taxon>Camelineae</taxon>
        <taxon>Arabidopsis</taxon>
    </lineage>
</organism>
<keyword id="KW-0025">Alternative splicing</keyword>
<keyword id="KW-0032">Aminotransferase</keyword>
<keyword id="KW-0576">Peroxisome</keyword>
<keyword id="KW-0663">Pyridoxal phosphate</keyword>
<keyword id="KW-1185">Reference proteome</keyword>
<keyword id="KW-0808">Transferase</keyword>